<evidence type="ECO:0000255" key="1">
    <source>
        <dbReference type="HAMAP-Rule" id="MF_00659"/>
    </source>
</evidence>
<sequence>MLNTKFDELMEFPCAFPFKVVGDAHETLTDRVVAVVQKHAPGDYSPTVKASSKGSYYSVTIRVTVTSKDHIETLYTELANIEGVRRVL</sequence>
<keyword id="KW-1185">Reference proteome</keyword>
<proteinExistence type="inferred from homology"/>
<protein>
    <recommendedName>
        <fullName evidence="1">UPF0250 protein SO_1163</fullName>
    </recommendedName>
</protein>
<feature type="chain" id="PRO_0000209312" description="UPF0250 protein SO_1163">
    <location>
        <begin position="1"/>
        <end position="88"/>
    </location>
</feature>
<accession>Q8EHQ4</accession>
<comment type="similarity">
    <text evidence="1">Belongs to the UPF0250 family.</text>
</comment>
<organism>
    <name type="scientific">Shewanella oneidensis (strain ATCC 700550 / JCM 31522 / CIP 106686 / LMG 19005 / NCIMB 14063 / MR-1)</name>
    <dbReference type="NCBI Taxonomy" id="211586"/>
    <lineage>
        <taxon>Bacteria</taxon>
        <taxon>Pseudomonadati</taxon>
        <taxon>Pseudomonadota</taxon>
        <taxon>Gammaproteobacteria</taxon>
        <taxon>Alteromonadales</taxon>
        <taxon>Shewanellaceae</taxon>
        <taxon>Shewanella</taxon>
    </lineage>
</organism>
<name>Y1163_SHEON</name>
<dbReference type="EMBL" id="AE014299">
    <property type="protein sequence ID" value="AAN54233.1"/>
    <property type="molecule type" value="Genomic_DNA"/>
</dbReference>
<dbReference type="RefSeq" id="NP_716788.1">
    <property type="nucleotide sequence ID" value="NC_004347.2"/>
</dbReference>
<dbReference type="SMR" id="Q8EHQ4"/>
<dbReference type="STRING" id="211586.SO_1163"/>
<dbReference type="PaxDb" id="211586-SO_1163"/>
<dbReference type="KEGG" id="son:SO_1163"/>
<dbReference type="PATRIC" id="fig|211586.12.peg.1115"/>
<dbReference type="eggNOG" id="COG2921">
    <property type="taxonomic scope" value="Bacteria"/>
</dbReference>
<dbReference type="HOGENOM" id="CLU_161438_2_1_6"/>
<dbReference type="OrthoDB" id="9793424at2"/>
<dbReference type="PhylomeDB" id="Q8EHQ4"/>
<dbReference type="BioCyc" id="SONE211586:G1GMP-1067-MONOMER"/>
<dbReference type="Proteomes" id="UP000008186">
    <property type="component" value="Chromosome"/>
</dbReference>
<dbReference type="GO" id="GO:0005829">
    <property type="term" value="C:cytosol"/>
    <property type="evidence" value="ECO:0000318"/>
    <property type="project" value="GO_Central"/>
</dbReference>
<dbReference type="FunFam" id="3.30.70.260:FF:000002">
    <property type="entry name" value="UPF0250 protein YbeD"/>
    <property type="match status" value="1"/>
</dbReference>
<dbReference type="Gene3D" id="3.30.70.260">
    <property type="match status" value="1"/>
</dbReference>
<dbReference type="HAMAP" id="MF_00659">
    <property type="entry name" value="UPF0250"/>
    <property type="match status" value="1"/>
</dbReference>
<dbReference type="InterPro" id="IPR007454">
    <property type="entry name" value="UPF0250_YbeD-like"/>
</dbReference>
<dbReference type="InterPro" id="IPR027471">
    <property type="entry name" value="YbeD-like_sf"/>
</dbReference>
<dbReference type="NCBIfam" id="NF003447">
    <property type="entry name" value="PRK04998.1"/>
    <property type="match status" value="1"/>
</dbReference>
<dbReference type="PANTHER" id="PTHR38036">
    <property type="entry name" value="UPF0250 PROTEIN YBED"/>
    <property type="match status" value="1"/>
</dbReference>
<dbReference type="PANTHER" id="PTHR38036:SF1">
    <property type="entry name" value="UPF0250 PROTEIN YBED"/>
    <property type="match status" value="1"/>
</dbReference>
<dbReference type="Pfam" id="PF04359">
    <property type="entry name" value="DUF493"/>
    <property type="match status" value="1"/>
</dbReference>
<dbReference type="SUPFAM" id="SSF117991">
    <property type="entry name" value="YbeD/HP0495-like"/>
    <property type="match status" value="1"/>
</dbReference>
<reference key="1">
    <citation type="journal article" date="2002" name="Nat. Biotechnol.">
        <title>Genome sequence of the dissimilatory metal ion-reducing bacterium Shewanella oneidensis.</title>
        <authorList>
            <person name="Heidelberg J.F."/>
            <person name="Paulsen I.T."/>
            <person name="Nelson K.E."/>
            <person name="Gaidos E.J."/>
            <person name="Nelson W.C."/>
            <person name="Read T.D."/>
            <person name="Eisen J.A."/>
            <person name="Seshadri R."/>
            <person name="Ward N.L."/>
            <person name="Methe B.A."/>
            <person name="Clayton R.A."/>
            <person name="Meyer T."/>
            <person name="Tsapin A."/>
            <person name="Scott J."/>
            <person name="Beanan M.J."/>
            <person name="Brinkac L.M."/>
            <person name="Daugherty S.C."/>
            <person name="DeBoy R.T."/>
            <person name="Dodson R.J."/>
            <person name="Durkin A.S."/>
            <person name="Haft D.H."/>
            <person name="Kolonay J.F."/>
            <person name="Madupu R."/>
            <person name="Peterson J.D."/>
            <person name="Umayam L.A."/>
            <person name="White O."/>
            <person name="Wolf A.M."/>
            <person name="Vamathevan J.J."/>
            <person name="Weidman J.F."/>
            <person name="Impraim M."/>
            <person name="Lee K."/>
            <person name="Berry K.J."/>
            <person name="Lee C."/>
            <person name="Mueller J."/>
            <person name="Khouri H.M."/>
            <person name="Gill J."/>
            <person name="Utterback T.R."/>
            <person name="McDonald L.A."/>
            <person name="Feldblyum T.V."/>
            <person name="Smith H.O."/>
            <person name="Venter J.C."/>
            <person name="Nealson K.H."/>
            <person name="Fraser C.M."/>
        </authorList>
    </citation>
    <scope>NUCLEOTIDE SEQUENCE [LARGE SCALE GENOMIC DNA]</scope>
    <source>
        <strain>ATCC 700550 / JCM 31522 / CIP 106686 / LMG 19005 / NCIMB 14063 / MR-1</strain>
    </source>
</reference>
<gene>
    <name type="ordered locus">SO_1163</name>
</gene>